<sequence>MLTPAFELTQDCDFLTVAIRVPHARASEFDVYFEGVDFKFYAKPYFLRLTLPGRIVENGSEQGTYDADKGIFTIRLPKETPGQHFEGLNMLTALLAPRKSRSAKPLVEEIGASGVAEEGADDEDEEFDWEIEQTPYEEVSESTLQSQCHYGFGNLRAGVVQRLQDELSEVIDIKDPDFTPVTERRQKRLAAELAKFDPDHYLADFFEDEAVEQILKYSPWWNDAHAEMVASLGKNQEQGDSAALVSFSEEEKYQLRKFVNKSYLLDKTAHRQVYYGLVDILLAYCYEVRVTEGEHSVESAWTIRKLSPTLCWFETWTDVHEILVSFGRRVLCYPLYRHFKLVLKAYRDTIKILQLGKSAVLKCLLDVHKVFQENDPAYILNDLYISDYCVWIQKAKSKKLAALTEALKAVSLSKAQLGLELPELEAAALLVQEEEGAGRAAQCNPSHQAPHSSPEPSDSDSTSSSGTEDSASEQEEPAGTQPSLLTSLQAPLLEEDSALIIRESGLCRNMASQGCEVSQGQPLASARAPLIEELGDALKMLRVSTPHGVSAGSHGSVEDAEERGQVPCD</sequence>
<reference key="1">
    <citation type="journal article" date="2005" name="Science">
        <title>The transcriptional landscape of the mammalian genome.</title>
        <authorList>
            <person name="Carninci P."/>
            <person name="Kasukawa T."/>
            <person name="Katayama S."/>
            <person name="Gough J."/>
            <person name="Frith M.C."/>
            <person name="Maeda N."/>
            <person name="Oyama R."/>
            <person name="Ravasi T."/>
            <person name="Lenhard B."/>
            <person name="Wells C."/>
            <person name="Kodzius R."/>
            <person name="Shimokawa K."/>
            <person name="Bajic V.B."/>
            <person name="Brenner S.E."/>
            <person name="Batalov S."/>
            <person name="Forrest A.R."/>
            <person name="Zavolan M."/>
            <person name="Davis M.J."/>
            <person name="Wilming L.G."/>
            <person name="Aidinis V."/>
            <person name="Allen J.E."/>
            <person name="Ambesi-Impiombato A."/>
            <person name="Apweiler R."/>
            <person name="Aturaliya R.N."/>
            <person name="Bailey T.L."/>
            <person name="Bansal M."/>
            <person name="Baxter L."/>
            <person name="Beisel K.W."/>
            <person name="Bersano T."/>
            <person name="Bono H."/>
            <person name="Chalk A.M."/>
            <person name="Chiu K.P."/>
            <person name="Choudhary V."/>
            <person name="Christoffels A."/>
            <person name="Clutterbuck D.R."/>
            <person name="Crowe M.L."/>
            <person name="Dalla E."/>
            <person name="Dalrymple B.P."/>
            <person name="de Bono B."/>
            <person name="Della Gatta G."/>
            <person name="di Bernardo D."/>
            <person name="Down T."/>
            <person name="Engstrom P."/>
            <person name="Fagiolini M."/>
            <person name="Faulkner G."/>
            <person name="Fletcher C.F."/>
            <person name="Fukushima T."/>
            <person name="Furuno M."/>
            <person name="Futaki S."/>
            <person name="Gariboldi M."/>
            <person name="Georgii-Hemming P."/>
            <person name="Gingeras T.R."/>
            <person name="Gojobori T."/>
            <person name="Green R.E."/>
            <person name="Gustincich S."/>
            <person name="Harbers M."/>
            <person name="Hayashi Y."/>
            <person name="Hensch T.K."/>
            <person name="Hirokawa N."/>
            <person name="Hill D."/>
            <person name="Huminiecki L."/>
            <person name="Iacono M."/>
            <person name="Ikeo K."/>
            <person name="Iwama A."/>
            <person name="Ishikawa T."/>
            <person name="Jakt M."/>
            <person name="Kanapin A."/>
            <person name="Katoh M."/>
            <person name="Kawasawa Y."/>
            <person name="Kelso J."/>
            <person name="Kitamura H."/>
            <person name="Kitano H."/>
            <person name="Kollias G."/>
            <person name="Krishnan S.P."/>
            <person name="Kruger A."/>
            <person name="Kummerfeld S.K."/>
            <person name="Kurochkin I.V."/>
            <person name="Lareau L.F."/>
            <person name="Lazarevic D."/>
            <person name="Lipovich L."/>
            <person name="Liu J."/>
            <person name="Liuni S."/>
            <person name="McWilliam S."/>
            <person name="Madan Babu M."/>
            <person name="Madera M."/>
            <person name="Marchionni L."/>
            <person name="Matsuda H."/>
            <person name="Matsuzawa S."/>
            <person name="Miki H."/>
            <person name="Mignone F."/>
            <person name="Miyake S."/>
            <person name="Morris K."/>
            <person name="Mottagui-Tabar S."/>
            <person name="Mulder N."/>
            <person name="Nakano N."/>
            <person name="Nakauchi H."/>
            <person name="Ng P."/>
            <person name="Nilsson R."/>
            <person name="Nishiguchi S."/>
            <person name="Nishikawa S."/>
            <person name="Nori F."/>
            <person name="Ohara O."/>
            <person name="Okazaki Y."/>
            <person name="Orlando V."/>
            <person name="Pang K.C."/>
            <person name="Pavan W.J."/>
            <person name="Pavesi G."/>
            <person name="Pesole G."/>
            <person name="Petrovsky N."/>
            <person name="Piazza S."/>
            <person name="Reed J."/>
            <person name="Reid J.F."/>
            <person name="Ring B.Z."/>
            <person name="Ringwald M."/>
            <person name="Rost B."/>
            <person name="Ruan Y."/>
            <person name="Salzberg S.L."/>
            <person name="Sandelin A."/>
            <person name="Schneider C."/>
            <person name="Schoenbach C."/>
            <person name="Sekiguchi K."/>
            <person name="Semple C.A."/>
            <person name="Seno S."/>
            <person name="Sessa L."/>
            <person name="Sheng Y."/>
            <person name="Shibata Y."/>
            <person name="Shimada H."/>
            <person name="Shimada K."/>
            <person name="Silva D."/>
            <person name="Sinclair B."/>
            <person name="Sperling S."/>
            <person name="Stupka E."/>
            <person name="Sugiura K."/>
            <person name="Sultana R."/>
            <person name="Takenaka Y."/>
            <person name="Taki K."/>
            <person name="Tammoja K."/>
            <person name="Tan S.L."/>
            <person name="Tang S."/>
            <person name="Taylor M.S."/>
            <person name="Tegner J."/>
            <person name="Teichmann S.A."/>
            <person name="Ueda H.R."/>
            <person name="van Nimwegen E."/>
            <person name="Verardo R."/>
            <person name="Wei C.L."/>
            <person name="Yagi K."/>
            <person name="Yamanishi H."/>
            <person name="Zabarovsky E."/>
            <person name="Zhu S."/>
            <person name="Zimmer A."/>
            <person name="Hide W."/>
            <person name="Bult C."/>
            <person name="Grimmond S.M."/>
            <person name="Teasdale R.D."/>
            <person name="Liu E.T."/>
            <person name="Brusic V."/>
            <person name="Quackenbush J."/>
            <person name="Wahlestedt C."/>
            <person name="Mattick J.S."/>
            <person name="Hume D.A."/>
            <person name="Kai C."/>
            <person name="Sasaki D."/>
            <person name="Tomaru Y."/>
            <person name="Fukuda S."/>
            <person name="Kanamori-Katayama M."/>
            <person name="Suzuki M."/>
            <person name="Aoki J."/>
            <person name="Arakawa T."/>
            <person name="Iida J."/>
            <person name="Imamura K."/>
            <person name="Itoh M."/>
            <person name="Kato T."/>
            <person name="Kawaji H."/>
            <person name="Kawagashira N."/>
            <person name="Kawashima T."/>
            <person name="Kojima M."/>
            <person name="Kondo S."/>
            <person name="Konno H."/>
            <person name="Nakano K."/>
            <person name="Ninomiya N."/>
            <person name="Nishio T."/>
            <person name="Okada M."/>
            <person name="Plessy C."/>
            <person name="Shibata K."/>
            <person name="Shiraki T."/>
            <person name="Suzuki S."/>
            <person name="Tagami M."/>
            <person name="Waki K."/>
            <person name="Watahiki A."/>
            <person name="Okamura-Oho Y."/>
            <person name="Suzuki H."/>
            <person name="Kawai J."/>
            <person name="Hayashizaki Y."/>
        </authorList>
    </citation>
    <scope>NUCLEOTIDE SEQUENCE [LARGE SCALE MRNA] (ISOFORM 1)</scope>
    <source>
        <strain>C57BL/6J</strain>
    </source>
</reference>
<reference key="2">
    <citation type="journal article" date="2004" name="Genome Res.">
        <title>The status, quality, and expansion of the NIH full-length cDNA project: the Mammalian Gene Collection (MGC).</title>
        <authorList>
            <consortium name="The MGC Project Team"/>
        </authorList>
    </citation>
    <scope>NUCLEOTIDE SEQUENCE [LARGE SCALE MRNA] (ISOFORM 2)</scope>
    <source>
        <strain>C57BL/6NCr</strain>
        <tissue>Hematopoietic stem cell</tissue>
    </source>
</reference>
<reference key="3">
    <citation type="journal article" date="2010" name="Cell">
        <title>A tissue-specific atlas of mouse protein phosphorylation and expression.</title>
        <authorList>
            <person name="Huttlin E.L."/>
            <person name="Jedrychowski M.P."/>
            <person name="Elias J.E."/>
            <person name="Goswami T."/>
            <person name="Rad R."/>
            <person name="Beausoleil S.A."/>
            <person name="Villen J."/>
            <person name="Haas W."/>
            <person name="Sowa M.E."/>
            <person name="Gygi S.P."/>
        </authorList>
    </citation>
    <scope>IDENTIFICATION BY MASS SPECTROMETRY [LARGE SCALE ANALYSIS]</scope>
    <source>
        <tissue>Spleen</tissue>
        <tissue>Testis</tissue>
    </source>
</reference>
<evidence type="ECO:0000250" key="1"/>
<evidence type="ECO:0000255" key="2">
    <source>
        <dbReference type="PROSITE-ProRule" id="PRU00547"/>
    </source>
</evidence>
<evidence type="ECO:0000256" key="3">
    <source>
        <dbReference type="SAM" id="MobiDB-lite"/>
    </source>
</evidence>
<evidence type="ECO:0000303" key="4">
    <source>
    </source>
</evidence>
<evidence type="ECO:0000305" key="5"/>
<gene>
    <name type="primary">Shq1</name>
</gene>
<name>SHQ1_MOUSE</name>
<proteinExistence type="evidence at protein level"/>
<dbReference type="EMBL" id="AK012978">
    <property type="status" value="NOT_ANNOTATED_CDS"/>
    <property type="molecule type" value="mRNA"/>
</dbReference>
<dbReference type="EMBL" id="BC052657">
    <property type="protein sequence ID" value="AAH52657.1"/>
    <property type="molecule type" value="mRNA"/>
</dbReference>
<dbReference type="CCDS" id="CCDS39580.2">
    <molecule id="Q7TMX5-1"/>
</dbReference>
<dbReference type="RefSeq" id="NP_853621.2">
    <molecule id="Q7TMX5-1"/>
    <property type="nucleotide sequence ID" value="NM_181590.5"/>
</dbReference>
<dbReference type="RefSeq" id="XP_006506732.1">
    <molecule id="Q7TMX5-2"/>
    <property type="nucleotide sequence ID" value="XM_006506669.5"/>
</dbReference>
<dbReference type="SMR" id="Q7TMX5"/>
<dbReference type="FunCoup" id="Q7TMX5">
    <property type="interactions" value="3856"/>
</dbReference>
<dbReference type="STRING" id="10090.ENSMUSP00000127797"/>
<dbReference type="iPTMnet" id="Q7TMX5"/>
<dbReference type="PhosphoSitePlus" id="Q7TMX5"/>
<dbReference type="SwissPalm" id="Q7TMX5"/>
<dbReference type="PaxDb" id="10090-ENSMUSP00000108938"/>
<dbReference type="PeptideAtlas" id="Q7TMX5"/>
<dbReference type="ProteomicsDB" id="255417">
    <molecule id="Q7TMX5-1"/>
</dbReference>
<dbReference type="ProteomicsDB" id="255418">
    <molecule id="Q7TMX5-2"/>
</dbReference>
<dbReference type="Pumba" id="Q7TMX5"/>
<dbReference type="Antibodypedia" id="51842">
    <property type="antibodies" value="92 antibodies from 21 providers"/>
</dbReference>
<dbReference type="Ensembl" id="ENSMUST00000089245.7">
    <molecule id="Q7TMX5-2"/>
    <property type="protein sequence ID" value="ENSMUSP00000086656.7"/>
    <property type="gene ID" value="ENSMUSG00000035378.18"/>
</dbReference>
<dbReference type="Ensembl" id="ENSMUST00000113312.9">
    <molecule id="Q7TMX5-1"/>
    <property type="protein sequence ID" value="ENSMUSP00000108938.3"/>
    <property type="gene ID" value="ENSMUSG00000035378.18"/>
</dbReference>
<dbReference type="Ensembl" id="ENSMUST00000170667.8">
    <molecule id="Q7TMX5-1"/>
    <property type="protein sequence ID" value="ENSMUSP00000127797.2"/>
    <property type="gene ID" value="ENSMUSG00000035378.18"/>
</dbReference>
<dbReference type="GeneID" id="72171"/>
<dbReference type="KEGG" id="mmu:72171"/>
<dbReference type="UCSC" id="uc009dby.2">
    <molecule id="Q7TMX5-2"/>
    <property type="organism name" value="mouse"/>
</dbReference>
<dbReference type="UCSC" id="uc009dbz.2">
    <molecule id="Q7TMX5-1"/>
    <property type="organism name" value="mouse"/>
</dbReference>
<dbReference type="AGR" id="MGI:1919421"/>
<dbReference type="CTD" id="55164"/>
<dbReference type="MGI" id="MGI:1919421">
    <property type="gene designation" value="Shq1"/>
</dbReference>
<dbReference type="VEuPathDB" id="HostDB:ENSMUSG00000035378"/>
<dbReference type="eggNOG" id="KOG3247">
    <property type="taxonomic scope" value="Eukaryota"/>
</dbReference>
<dbReference type="GeneTree" id="ENSGT00390000007605"/>
<dbReference type="HOGENOM" id="CLU_030217_0_0_1"/>
<dbReference type="InParanoid" id="Q7TMX5"/>
<dbReference type="OMA" id="HNIESAW"/>
<dbReference type="OrthoDB" id="73639at2759"/>
<dbReference type="PhylomeDB" id="Q7TMX5"/>
<dbReference type="TreeFam" id="TF106118"/>
<dbReference type="Reactome" id="R-MMU-171319">
    <property type="pathway name" value="Telomere Extension By Telomerase"/>
</dbReference>
<dbReference type="BioGRID-ORCS" id="72171">
    <property type="hits" value="23 hits in 61 CRISPR screens"/>
</dbReference>
<dbReference type="ChiTaRS" id="Shq1">
    <property type="organism name" value="mouse"/>
</dbReference>
<dbReference type="PRO" id="PR:Q7TMX5"/>
<dbReference type="Proteomes" id="UP000000589">
    <property type="component" value="Chromosome 6"/>
</dbReference>
<dbReference type="RNAct" id="Q7TMX5">
    <property type="molecule type" value="protein"/>
</dbReference>
<dbReference type="Bgee" id="ENSMUSG00000035378">
    <property type="expression patterns" value="Expressed in dorsal pancreas and 181 other cell types or tissues"/>
</dbReference>
<dbReference type="GO" id="GO:0005737">
    <property type="term" value="C:cytoplasm"/>
    <property type="evidence" value="ECO:0000250"/>
    <property type="project" value="UniProtKB"/>
</dbReference>
<dbReference type="GO" id="GO:0005829">
    <property type="term" value="C:cytosol"/>
    <property type="evidence" value="ECO:0007669"/>
    <property type="project" value="UniProtKB-SubCell"/>
</dbReference>
<dbReference type="GO" id="GO:0005654">
    <property type="term" value="C:nucleoplasm"/>
    <property type="evidence" value="ECO:0000250"/>
    <property type="project" value="UniProtKB"/>
</dbReference>
<dbReference type="GO" id="GO:0000493">
    <property type="term" value="P:box H/ACA snoRNP assembly"/>
    <property type="evidence" value="ECO:0007669"/>
    <property type="project" value="InterPro"/>
</dbReference>
<dbReference type="GO" id="GO:1904263">
    <property type="term" value="P:positive regulation of TORC1 signaling"/>
    <property type="evidence" value="ECO:0000316"/>
    <property type="project" value="MGI"/>
</dbReference>
<dbReference type="GO" id="GO:0022618">
    <property type="term" value="P:protein-RNA complex assembly"/>
    <property type="evidence" value="ECO:0000250"/>
    <property type="project" value="UniProtKB"/>
</dbReference>
<dbReference type="GO" id="GO:0060765">
    <property type="term" value="P:regulation of androgen receptor signaling pathway"/>
    <property type="evidence" value="ECO:0000316"/>
    <property type="project" value="MGI"/>
</dbReference>
<dbReference type="FunFam" id="2.60.40.790:FF:000022">
    <property type="entry name" value="Protein SHQ1 homolog"/>
    <property type="match status" value="1"/>
</dbReference>
<dbReference type="Gene3D" id="2.60.40.790">
    <property type="match status" value="1"/>
</dbReference>
<dbReference type="InterPro" id="IPR007052">
    <property type="entry name" value="CS_dom"/>
</dbReference>
<dbReference type="InterPro" id="IPR008978">
    <property type="entry name" value="HSP20-like_chaperone"/>
</dbReference>
<dbReference type="InterPro" id="IPR039742">
    <property type="entry name" value="Shq1"/>
</dbReference>
<dbReference type="InterPro" id="IPR048696">
    <property type="entry name" value="SHQ1-like_CS"/>
</dbReference>
<dbReference type="InterPro" id="IPR007009">
    <property type="entry name" value="Shq1_C"/>
</dbReference>
<dbReference type="PANTHER" id="PTHR12967">
    <property type="entry name" value="PROTEIN SHQ1 HOMOLOG"/>
    <property type="match status" value="1"/>
</dbReference>
<dbReference type="PANTHER" id="PTHR12967:SF0">
    <property type="entry name" value="PROTEIN SHQ1 HOMOLOG"/>
    <property type="match status" value="1"/>
</dbReference>
<dbReference type="Pfam" id="PF04925">
    <property type="entry name" value="SHQ1"/>
    <property type="match status" value="1"/>
</dbReference>
<dbReference type="Pfam" id="PF21413">
    <property type="entry name" value="SHQ1-like_CS"/>
    <property type="match status" value="1"/>
</dbReference>
<dbReference type="SUPFAM" id="SSF49764">
    <property type="entry name" value="HSP20-like chaperones"/>
    <property type="match status" value="1"/>
</dbReference>
<dbReference type="PROSITE" id="PS51203">
    <property type="entry name" value="CS"/>
    <property type="match status" value="1"/>
</dbReference>
<accession>Q7TMX5</accession>
<comment type="function">
    <text evidence="1">Required for the quantitative accumulation of H/ACA ribonucleoproteins (RNPs), including telomerase, probably through the stabilization of DKC1, from the time of its synthesis until its association with NOP10, NHP2, and NAF1 at the nascent H/ACA RNA.</text>
</comment>
<comment type="subunit">
    <text evidence="1">Directly interacts with DKC1 alone, but not in the context of the core trimer composed of DKC1, NOP10 and NHP2, nor in the presence of NAF1. Does not interact with NAF1 (By similarity).</text>
</comment>
<comment type="subcellular location">
    <subcellularLocation>
        <location evidence="1">Cytoplasm</location>
        <location evidence="1">Cytosol</location>
    </subcellularLocation>
    <subcellularLocation>
        <location evidence="1">Nucleus</location>
        <location evidence="1">Nucleoplasm</location>
    </subcellularLocation>
    <text evidence="1">May at least partially shuttle between cytosol and nucleoplasm.</text>
</comment>
<comment type="alternative products">
    <event type="alternative splicing"/>
    <isoform>
        <id>Q7TMX5-1</id>
        <name>1</name>
        <sequence type="displayed"/>
    </isoform>
    <isoform>
        <id>Q7TMX5-2</id>
        <name>2</name>
        <sequence type="described" ref="VSP_027961"/>
    </isoform>
</comment>
<comment type="similarity">
    <text evidence="5">Belongs to the SHQ1 family.</text>
</comment>
<keyword id="KW-0025">Alternative splicing</keyword>
<keyword id="KW-0963">Cytoplasm</keyword>
<keyword id="KW-0539">Nucleus</keyword>
<keyword id="KW-1185">Reference proteome</keyword>
<organism>
    <name type="scientific">Mus musculus</name>
    <name type="common">Mouse</name>
    <dbReference type="NCBI Taxonomy" id="10090"/>
    <lineage>
        <taxon>Eukaryota</taxon>
        <taxon>Metazoa</taxon>
        <taxon>Chordata</taxon>
        <taxon>Craniata</taxon>
        <taxon>Vertebrata</taxon>
        <taxon>Euteleostomi</taxon>
        <taxon>Mammalia</taxon>
        <taxon>Eutheria</taxon>
        <taxon>Euarchontoglires</taxon>
        <taxon>Glires</taxon>
        <taxon>Rodentia</taxon>
        <taxon>Myomorpha</taxon>
        <taxon>Muroidea</taxon>
        <taxon>Muridae</taxon>
        <taxon>Murinae</taxon>
        <taxon>Mus</taxon>
        <taxon>Mus</taxon>
    </lineage>
</organism>
<feature type="chain" id="PRO_0000302823" description="Protein SHQ1 homolog">
    <location>
        <begin position="1"/>
        <end position="569"/>
    </location>
</feature>
<feature type="domain" description="CS" evidence="2">
    <location>
        <begin position="1"/>
        <end position="89"/>
    </location>
</feature>
<feature type="region of interest" description="Disordered" evidence="3">
    <location>
        <begin position="439"/>
        <end position="482"/>
    </location>
</feature>
<feature type="region of interest" description="Disordered" evidence="3">
    <location>
        <begin position="545"/>
        <end position="569"/>
    </location>
</feature>
<feature type="compositionally biased region" description="Low complexity" evidence="3">
    <location>
        <begin position="452"/>
        <end position="469"/>
    </location>
</feature>
<feature type="splice variant" id="VSP_027961" description="In isoform 2." evidence="4">
    <location>
        <begin position="244"/>
        <end position="354"/>
    </location>
</feature>
<feature type="sequence conflict" description="In Ref. 2; AAH52657." evidence="5" ref="2">
    <original>G</original>
    <variation>E</variation>
    <location>
        <position position="87"/>
    </location>
</feature>
<feature type="sequence conflict" description="In Ref. 2; AAH52657." evidence="5" ref="2">
    <original>A</original>
    <variation>T</variation>
    <location>
        <position position="528"/>
    </location>
</feature>
<protein>
    <recommendedName>
        <fullName>Protein SHQ1 homolog</fullName>
    </recommendedName>
</protein>